<protein>
    <recommendedName>
        <fullName>Pantetheinase</fullName>
        <ecNumber evidence="4 11">3.5.1.92</ecNumber>
    </recommendedName>
    <alternativeName>
        <fullName>Pantetheine hydrolase</fullName>
    </alternativeName>
    <alternativeName>
        <fullName>Tiff66</fullName>
    </alternativeName>
    <alternativeName>
        <fullName>Vascular non-inflammatory molecule 1</fullName>
        <shortName>Vanin-1</shortName>
    </alternativeName>
</protein>
<dbReference type="EC" id="3.5.1.92" evidence="4 11"/>
<dbReference type="EMBL" id="AJ132099">
    <property type="protein sequence ID" value="CAA10568.1"/>
    <property type="molecule type" value="mRNA"/>
</dbReference>
<dbReference type="EMBL" id="U39664">
    <property type="protein sequence ID" value="AAF21453.1"/>
    <property type="molecule type" value="mRNA"/>
</dbReference>
<dbReference type="EMBL" id="AK290425">
    <property type="protein sequence ID" value="BAF83114.1"/>
    <property type="molecule type" value="mRNA"/>
</dbReference>
<dbReference type="EMBL" id="DQ100297">
    <property type="protein sequence ID" value="AAY88742.1"/>
    <property type="molecule type" value="Genomic_DNA"/>
</dbReference>
<dbReference type="EMBL" id="AL032821">
    <property type="status" value="NOT_ANNOTATED_CDS"/>
    <property type="molecule type" value="Genomic_DNA"/>
</dbReference>
<dbReference type="EMBL" id="BC096265">
    <property type="protein sequence ID" value="AAH96265.1"/>
    <property type="molecule type" value="mRNA"/>
</dbReference>
<dbReference type="EMBL" id="BC096266">
    <property type="protein sequence ID" value="AAH96266.1"/>
    <property type="molecule type" value="mRNA"/>
</dbReference>
<dbReference type="EMBL" id="BC096267">
    <property type="protein sequence ID" value="AAH96267.1"/>
    <property type="molecule type" value="mRNA"/>
</dbReference>
<dbReference type="EMBL" id="BC096268">
    <property type="protein sequence ID" value="AAH96268.1"/>
    <property type="molecule type" value="mRNA"/>
</dbReference>
<dbReference type="CCDS" id="CCDS5159.1"/>
<dbReference type="RefSeq" id="NP_004657.2">
    <property type="nucleotide sequence ID" value="NM_004666.3"/>
</dbReference>
<dbReference type="PDB" id="4CYF">
    <property type="method" value="X-ray"/>
    <property type="resolution" value="2.25 A"/>
    <property type="chains" value="A/B=22-513"/>
</dbReference>
<dbReference type="PDB" id="4CYG">
    <property type="method" value="X-ray"/>
    <property type="resolution" value="2.30 A"/>
    <property type="chains" value="A/B=22-513"/>
</dbReference>
<dbReference type="PDB" id="4CYY">
    <property type="method" value="X-ray"/>
    <property type="resolution" value="2.89 A"/>
    <property type="chains" value="A=27-513"/>
</dbReference>
<dbReference type="PDB" id="7SLV">
    <property type="method" value="X-ray"/>
    <property type="resolution" value="2.13 A"/>
    <property type="chains" value="A=22-483"/>
</dbReference>
<dbReference type="PDB" id="7SLX">
    <property type="method" value="X-ray"/>
    <property type="resolution" value="2.35 A"/>
    <property type="chains" value="A=22-483"/>
</dbReference>
<dbReference type="PDB" id="7SLY">
    <property type="method" value="X-ray"/>
    <property type="resolution" value="2.17 A"/>
    <property type="chains" value="A=22-483"/>
</dbReference>
<dbReference type="PDB" id="9IZL">
    <property type="method" value="X-ray"/>
    <property type="resolution" value="2.28 A"/>
    <property type="chains" value="A/B=22-483"/>
</dbReference>
<dbReference type="PDBsum" id="4CYF"/>
<dbReference type="PDBsum" id="4CYG"/>
<dbReference type="PDBsum" id="4CYY"/>
<dbReference type="PDBsum" id="7SLV"/>
<dbReference type="PDBsum" id="7SLX"/>
<dbReference type="PDBsum" id="7SLY"/>
<dbReference type="PDBsum" id="9IZL"/>
<dbReference type="SMR" id="O95497"/>
<dbReference type="BioGRID" id="114395">
    <property type="interactions" value="14"/>
</dbReference>
<dbReference type="FunCoup" id="O95497">
    <property type="interactions" value="33"/>
</dbReference>
<dbReference type="IntAct" id="O95497">
    <property type="interactions" value="7"/>
</dbReference>
<dbReference type="STRING" id="9606.ENSP00000356905"/>
<dbReference type="BindingDB" id="O95497"/>
<dbReference type="ChEMBL" id="CHEMBL4739843"/>
<dbReference type="GuidetoPHARMACOLOGY" id="3063"/>
<dbReference type="GlyConnect" id="1966">
    <property type="glycosylation" value="12 N-Linked glycans (4 sites)"/>
</dbReference>
<dbReference type="GlyCosmos" id="O95497">
    <property type="glycosylation" value="7 sites, 12 glycans"/>
</dbReference>
<dbReference type="GlyGen" id="O95497">
    <property type="glycosylation" value="7 sites, 73 N-linked glycans (4 sites)"/>
</dbReference>
<dbReference type="iPTMnet" id="O95497"/>
<dbReference type="PhosphoSitePlus" id="O95497"/>
<dbReference type="BioMuta" id="VNN1"/>
<dbReference type="jPOST" id="O95497"/>
<dbReference type="MassIVE" id="O95497"/>
<dbReference type="PaxDb" id="9606-ENSP00000356905"/>
<dbReference type="PeptideAtlas" id="O95497"/>
<dbReference type="ProteomicsDB" id="50924"/>
<dbReference type="Antibodypedia" id="32934">
    <property type="antibodies" value="252 antibodies from 32 providers"/>
</dbReference>
<dbReference type="DNASU" id="8876"/>
<dbReference type="Ensembl" id="ENST00000367928.5">
    <property type="protein sequence ID" value="ENSP00000356905.4"/>
    <property type="gene ID" value="ENSG00000112299.8"/>
</dbReference>
<dbReference type="GeneID" id="8876"/>
<dbReference type="KEGG" id="hsa:8876"/>
<dbReference type="MANE-Select" id="ENST00000367928.5">
    <property type="protein sequence ID" value="ENSP00000356905.4"/>
    <property type="RefSeq nucleotide sequence ID" value="NM_004666.3"/>
    <property type="RefSeq protein sequence ID" value="NP_004657.2"/>
</dbReference>
<dbReference type="UCSC" id="uc003qdo.4">
    <property type="organism name" value="human"/>
</dbReference>
<dbReference type="AGR" id="HGNC:12705"/>
<dbReference type="CTD" id="8876"/>
<dbReference type="DisGeNET" id="8876"/>
<dbReference type="GeneCards" id="VNN1"/>
<dbReference type="HGNC" id="HGNC:12705">
    <property type="gene designation" value="VNN1"/>
</dbReference>
<dbReference type="HPA" id="ENSG00000112299">
    <property type="expression patterns" value="Group enriched (gallbladder, intestine, liver)"/>
</dbReference>
<dbReference type="MIM" id="603570">
    <property type="type" value="gene"/>
</dbReference>
<dbReference type="neXtProt" id="NX_O95497"/>
<dbReference type="OpenTargets" id="ENSG00000112299"/>
<dbReference type="PharmGKB" id="PA37321"/>
<dbReference type="VEuPathDB" id="HostDB:ENSG00000112299"/>
<dbReference type="eggNOG" id="KOG0806">
    <property type="taxonomic scope" value="Eukaryota"/>
</dbReference>
<dbReference type="GeneTree" id="ENSGT00390000013823"/>
<dbReference type="HOGENOM" id="CLU_033209_2_0_1"/>
<dbReference type="InParanoid" id="O95497"/>
<dbReference type="OMA" id="TNLNTCG"/>
<dbReference type="OrthoDB" id="10250282at2759"/>
<dbReference type="PAN-GO" id="O95497">
    <property type="GO annotations" value="2 GO annotations based on evolutionary models"/>
</dbReference>
<dbReference type="PhylomeDB" id="O95497"/>
<dbReference type="TreeFam" id="TF323645"/>
<dbReference type="BRENDA" id="3.5.1.92">
    <property type="organism ID" value="2681"/>
</dbReference>
<dbReference type="PathwayCommons" id="O95497"/>
<dbReference type="Reactome" id="R-HSA-163125">
    <property type="pathway name" value="Post-translational modification: synthesis of GPI-anchored proteins"/>
</dbReference>
<dbReference type="Reactome" id="R-HSA-199220">
    <property type="pathway name" value="Vitamin B5 (pantothenate) metabolism"/>
</dbReference>
<dbReference type="Reactome" id="R-HSA-6798695">
    <property type="pathway name" value="Neutrophil degranulation"/>
</dbReference>
<dbReference type="BioGRID-ORCS" id="8876">
    <property type="hits" value="16 hits in 1156 CRISPR screens"/>
</dbReference>
<dbReference type="ChiTaRS" id="VNN1">
    <property type="organism name" value="human"/>
</dbReference>
<dbReference type="EvolutionaryTrace" id="O95497"/>
<dbReference type="GeneWiki" id="VNN1"/>
<dbReference type="GenomeRNAi" id="8876"/>
<dbReference type="Pharos" id="O95497">
    <property type="development level" value="Tchem"/>
</dbReference>
<dbReference type="PRO" id="PR:O95497"/>
<dbReference type="Proteomes" id="UP000005640">
    <property type="component" value="Chromosome 6"/>
</dbReference>
<dbReference type="RNAct" id="O95497">
    <property type="molecule type" value="protein"/>
</dbReference>
<dbReference type="Bgee" id="ENSG00000112299">
    <property type="expression patterns" value="Expressed in jejunal mucosa and 121 other cell types or tissues"/>
</dbReference>
<dbReference type="GO" id="GO:0035577">
    <property type="term" value="C:azurophil granule membrane"/>
    <property type="evidence" value="ECO:0000304"/>
    <property type="project" value="Reactome"/>
</dbReference>
<dbReference type="GO" id="GO:0005576">
    <property type="term" value="C:extracellular region"/>
    <property type="evidence" value="ECO:0000304"/>
    <property type="project" value="Reactome"/>
</dbReference>
<dbReference type="GO" id="GO:0016020">
    <property type="term" value="C:membrane"/>
    <property type="evidence" value="ECO:0000304"/>
    <property type="project" value="BHF-UCL"/>
</dbReference>
<dbReference type="GO" id="GO:0005886">
    <property type="term" value="C:plasma membrane"/>
    <property type="evidence" value="ECO:0000304"/>
    <property type="project" value="Reactome"/>
</dbReference>
<dbReference type="GO" id="GO:0098552">
    <property type="term" value="C:side of membrane"/>
    <property type="evidence" value="ECO:0007669"/>
    <property type="project" value="UniProtKB-KW"/>
</dbReference>
<dbReference type="GO" id="GO:0017159">
    <property type="term" value="F:pantetheine hydrolase activity"/>
    <property type="evidence" value="ECO:0000314"/>
    <property type="project" value="UniProtKB"/>
</dbReference>
<dbReference type="GO" id="GO:0002526">
    <property type="term" value="P:acute inflammatory response"/>
    <property type="evidence" value="ECO:0000250"/>
    <property type="project" value="BHF-UCL"/>
</dbReference>
<dbReference type="GO" id="GO:0098609">
    <property type="term" value="P:cell-cell adhesion"/>
    <property type="evidence" value="ECO:0000250"/>
    <property type="project" value="BHF-UCL"/>
</dbReference>
<dbReference type="GO" id="GO:0002544">
    <property type="term" value="P:chronic inflammatory response"/>
    <property type="evidence" value="ECO:0000250"/>
    <property type="project" value="BHF-UCL"/>
</dbReference>
<dbReference type="GO" id="GO:0015938">
    <property type="term" value="P:coenzyme A catabolic process"/>
    <property type="evidence" value="ECO:0007669"/>
    <property type="project" value="Ensembl"/>
</dbReference>
<dbReference type="GO" id="GO:0006954">
    <property type="term" value="P:inflammatory response"/>
    <property type="evidence" value="ECO:0000250"/>
    <property type="project" value="BHF-UCL"/>
</dbReference>
<dbReference type="GO" id="GO:0045087">
    <property type="term" value="P:innate immune response"/>
    <property type="evidence" value="ECO:0000250"/>
    <property type="project" value="BHF-UCL"/>
</dbReference>
<dbReference type="GO" id="GO:0015939">
    <property type="term" value="P:pantothenate metabolic process"/>
    <property type="evidence" value="ECO:0000314"/>
    <property type="project" value="UniProtKB"/>
</dbReference>
<dbReference type="GO" id="GO:1902177">
    <property type="term" value="P:positive regulation of oxidative stress-induced intrinsic apoptotic signaling pathway"/>
    <property type="evidence" value="ECO:0000250"/>
    <property type="project" value="BHF-UCL"/>
</dbReference>
<dbReference type="GO" id="GO:0033089">
    <property type="term" value="P:positive regulation of T cell differentiation in thymus"/>
    <property type="evidence" value="ECO:0000250"/>
    <property type="project" value="BHF-UCL"/>
</dbReference>
<dbReference type="GO" id="GO:0006979">
    <property type="term" value="P:response to oxidative stress"/>
    <property type="evidence" value="ECO:0000304"/>
    <property type="project" value="BHF-UCL"/>
</dbReference>
<dbReference type="CDD" id="cd07567">
    <property type="entry name" value="biotinidase_like"/>
    <property type="match status" value="1"/>
</dbReference>
<dbReference type="FunFam" id="3.60.110.10:FF:000001">
    <property type="entry name" value="biotinidase isoform X1"/>
    <property type="match status" value="1"/>
</dbReference>
<dbReference type="Gene3D" id="3.60.110.10">
    <property type="entry name" value="Carbon-nitrogen hydrolase"/>
    <property type="match status" value="1"/>
</dbReference>
<dbReference type="InterPro" id="IPR012101">
    <property type="entry name" value="Biotinidase-like_euk"/>
</dbReference>
<dbReference type="InterPro" id="IPR040154">
    <property type="entry name" value="Biotinidase/VNN"/>
</dbReference>
<dbReference type="InterPro" id="IPR003010">
    <property type="entry name" value="C-N_Hydrolase"/>
</dbReference>
<dbReference type="InterPro" id="IPR036526">
    <property type="entry name" value="C-N_Hydrolase_sf"/>
</dbReference>
<dbReference type="InterPro" id="IPR043957">
    <property type="entry name" value="Vanin_C"/>
</dbReference>
<dbReference type="PANTHER" id="PTHR10609">
    <property type="entry name" value="BIOTINIDASE-RELATED"/>
    <property type="match status" value="1"/>
</dbReference>
<dbReference type="PANTHER" id="PTHR10609:SF16">
    <property type="entry name" value="PANTETHEINASE"/>
    <property type="match status" value="1"/>
</dbReference>
<dbReference type="Pfam" id="PF00795">
    <property type="entry name" value="CN_hydrolase"/>
    <property type="match status" value="1"/>
</dbReference>
<dbReference type="Pfam" id="PF19018">
    <property type="entry name" value="Vanin_C"/>
    <property type="match status" value="1"/>
</dbReference>
<dbReference type="PIRSF" id="PIRSF011861">
    <property type="entry name" value="Biotinidase"/>
    <property type="match status" value="1"/>
</dbReference>
<dbReference type="SUPFAM" id="SSF56317">
    <property type="entry name" value="Carbon-nitrogen hydrolase"/>
    <property type="match status" value="1"/>
</dbReference>
<dbReference type="PROSITE" id="PS50263">
    <property type="entry name" value="CN_HYDROLASE"/>
    <property type="match status" value="1"/>
</dbReference>
<proteinExistence type="evidence at protein level"/>
<feature type="signal peptide" evidence="1">
    <location>
        <begin position="1"/>
        <end position="21"/>
    </location>
</feature>
<feature type="chain" id="PRO_0000019712" description="Pantetheinase">
    <location>
        <begin position="22"/>
        <end position="491"/>
    </location>
</feature>
<feature type="propeptide" id="PRO_0000019713" description="Removed in mature form" evidence="1">
    <location>
        <begin position="492"/>
        <end position="513"/>
    </location>
</feature>
<feature type="domain" description="CN hydrolase" evidence="2">
    <location>
        <begin position="39"/>
        <end position="306"/>
    </location>
</feature>
<feature type="active site" description="Proton acceptor" evidence="2 17">
    <location>
        <position position="79"/>
    </location>
</feature>
<feature type="active site" description="Proton donor" evidence="2 17">
    <location>
        <position position="178"/>
    </location>
</feature>
<feature type="active site" description="Nucleophile" evidence="2 11">
    <location>
        <position position="211"/>
    </location>
</feature>
<feature type="lipid moiety-binding region" description="GPI-anchor amidated glycine" evidence="1">
    <location>
        <position position="491"/>
    </location>
</feature>
<feature type="glycosylation site" description="N-linked (GlcNAc...) asparagine" evidence="6 18 19 20">
    <location>
        <position position="38"/>
    </location>
</feature>
<feature type="glycosylation site" description="N-linked (GlcNAc...) asparagine" evidence="8 18 19 20">
    <location>
        <position position="130"/>
    </location>
</feature>
<feature type="glycosylation site" description="N-linked (GlcNAc...) asparagine" evidence="1 20">
    <location>
        <position position="200"/>
    </location>
</feature>
<feature type="glycosylation site" description="N-linked (GlcNAc...) asparagine" evidence="8">
    <location>
        <position position="283"/>
    </location>
</feature>
<feature type="glycosylation site" description="N-linked (GlcNAc...) asparagine" evidence="8 18 19 20">
    <location>
        <position position="315"/>
    </location>
</feature>
<feature type="glycosylation site" description="N-linked (GlcNAc...) asparagine" evidence="6 8 9 18 19 20">
    <location>
        <position position="353"/>
    </location>
</feature>
<feature type="sequence variant" id="VAR_023529" description="In dbSNP:rs2294757." evidence="5 12 13 14">
    <original>T</original>
    <variation>I</variation>
    <location>
        <position position="26"/>
    </location>
</feature>
<feature type="sequence variant" id="VAR_023967" evidence="14">
    <original>A</original>
    <variation>T</variation>
    <location>
        <position position="63"/>
    </location>
</feature>
<feature type="sequence variant" id="VAR_023968" description="In dbSNP:rs2272996." evidence="7 14">
    <original>N</original>
    <variation>S</variation>
    <location>
        <position position="131"/>
    </location>
</feature>
<feature type="sequence variant" id="VAR_023969" description="In dbSNP:rs45610032." evidence="14">
    <original>V</original>
    <variation>L</variation>
    <location>
        <position position="136"/>
    </location>
</feature>
<feature type="sequence variant" id="VAR_023970" description="In dbSNP:rs45624336." evidence="14">
    <original>D</original>
    <variation>N</variation>
    <location>
        <position position="146"/>
    </location>
</feature>
<feature type="sequence variant" id="VAR_023971" description="In dbSNP:rs45523444." evidence="14">
    <original>E</original>
    <variation>D</variation>
    <location>
        <position position="296"/>
    </location>
</feature>
<feature type="sequence variant" id="VAR_023972" description="In dbSNP:rs34535050." evidence="14">
    <original>A</original>
    <variation>E</variation>
    <location>
        <position position="325"/>
    </location>
</feature>
<feature type="sequence variant" id="VAR_023973" description="In dbSNP:rs45562238." evidence="14">
    <original>T</original>
    <variation>A</variation>
    <location>
        <position position="336"/>
    </location>
</feature>
<feature type="sequence variant" id="VAR_023974" description="In dbSNP:rs35938565." evidence="14">
    <original>I</original>
    <variation>T</variation>
    <location>
        <position position="373"/>
    </location>
</feature>
<feature type="mutagenesis site" description="Abolishes enzyme activity." evidence="11">
    <original>E</original>
    <variation>A</variation>
    <location>
        <position position="79"/>
    </location>
</feature>
<feature type="mutagenesis site" description="Abolishes enzyme activity." evidence="11">
    <original>K</original>
    <variation>A</variation>
    <location>
        <position position="178"/>
    </location>
</feature>
<feature type="sequence conflict" description="In Ref. 6; AAH96268." evidence="15" ref="6">
    <original>D</original>
    <variation>N</variation>
    <location>
        <position position="101"/>
    </location>
</feature>
<feature type="sequence conflict" description="In Ref. 4; AAY88742." evidence="15" ref="4">
    <original>N</original>
    <variation>I</variation>
    <location>
        <position position="113"/>
    </location>
</feature>
<feature type="sequence conflict" description="In Ref. 2; AAF21453." evidence="15" ref="2">
    <original>E</original>
    <variation>D</variation>
    <location>
        <position position="423"/>
    </location>
</feature>
<feature type="strand" evidence="22">
    <location>
        <begin position="24"/>
        <end position="32"/>
    </location>
</feature>
<feature type="helix" evidence="22">
    <location>
        <begin position="46"/>
        <end position="69"/>
    </location>
</feature>
<feature type="strand" evidence="22">
    <location>
        <begin position="73"/>
        <end position="76"/>
    </location>
</feature>
<feature type="turn" evidence="22">
    <location>
        <begin position="79"/>
        <end position="83"/>
    </location>
</feature>
<feature type="helix" evidence="22">
    <location>
        <begin position="89"/>
        <end position="92"/>
    </location>
</feature>
<feature type="helix" evidence="22">
    <location>
        <begin position="93"/>
        <end position="95"/>
    </location>
</feature>
<feature type="helix" evidence="22">
    <location>
        <begin position="102"/>
        <end position="104"/>
    </location>
</feature>
<feature type="turn" evidence="22">
    <location>
        <begin position="108"/>
        <end position="110"/>
    </location>
</feature>
<feature type="turn" evidence="22">
    <location>
        <begin position="112"/>
        <end position="115"/>
    </location>
</feature>
<feature type="helix" evidence="22">
    <location>
        <begin position="119"/>
        <end position="130"/>
    </location>
</feature>
<feature type="strand" evidence="22">
    <location>
        <begin position="133"/>
        <end position="144"/>
    </location>
</feature>
<feature type="strand" evidence="22">
    <location>
        <begin position="156"/>
        <end position="166"/>
    </location>
</feature>
<feature type="strand" evidence="22">
    <location>
        <begin position="172"/>
        <end position="177"/>
    </location>
</feature>
<feature type="strand" evidence="22">
    <location>
        <begin position="198"/>
        <end position="201"/>
    </location>
</feature>
<feature type="strand" evidence="22">
    <location>
        <begin position="204"/>
        <end position="208"/>
    </location>
</feature>
<feature type="helix" evidence="22">
    <location>
        <begin position="211"/>
        <end position="215"/>
    </location>
</feature>
<feature type="turn" evidence="21">
    <location>
        <begin position="217"/>
        <end position="219"/>
    </location>
</feature>
<feature type="helix" evidence="22">
    <location>
        <begin position="220"/>
        <end position="225"/>
    </location>
</feature>
<feature type="strand" evidence="22">
    <location>
        <begin position="230"/>
        <end position="236"/>
    </location>
</feature>
<feature type="turn" evidence="22">
    <location>
        <begin position="242"/>
        <end position="244"/>
    </location>
</feature>
<feature type="helix" evidence="22">
    <location>
        <begin position="247"/>
        <end position="258"/>
    </location>
</feature>
<feature type="strand" evidence="22">
    <location>
        <begin position="261"/>
        <end position="267"/>
    </location>
</feature>
<feature type="helix" evidence="22">
    <location>
        <begin position="270"/>
        <end position="272"/>
    </location>
</feature>
<feature type="strand" evidence="22">
    <location>
        <begin position="277"/>
        <end position="280"/>
    </location>
</feature>
<feature type="strand" evidence="22">
    <location>
        <begin position="282"/>
        <end position="289"/>
    </location>
</feature>
<feature type="strand" evidence="22">
    <location>
        <begin position="298"/>
        <end position="307"/>
    </location>
</feature>
<feature type="helix" evidence="22">
    <location>
        <begin position="318"/>
        <end position="322"/>
    </location>
</feature>
<feature type="strand" evidence="22">
    <location>
        <begin position="332"/>
        <end position="337"/>
    </location>
</feature>
<feature type="strand" evidence="22">
    <location>
        <begin position="340"/>
        <end position="346"/>
    </location>
</feature>
<feature type="strand" evidence="22">
    <location>
        <begin position="349"/>
        <end position="358"/>
    </location>
</feature>
<feature type="strand" evidence="22">
    <location>
        <begin position="361"/>
        <end position="371"/>
    </location>
</feature>
<feature type="strand" evidence="22">
    <location>
        <begin position="378"/>
        <end position="387"/>
    </location>
</feature>
<feature type="strand" evidence="22">
    <location>
        <begin position="393"/>
        <end position="402"/>
    </location>
</feature>
<feature type="strand" evidence="22">
    <location>
        <begin position="404"/>
        <end position="407"/>
    </location>
</feature>
<feature type="helix" evidence="22">
    <location>
        <begin position="408"/>
        <end position="410"/>
    </location>
</feature>
<feature type="strand" evidence="22">
    <location>
        <begin position="422"/>
        <end position="429"/>
    </location>
</feature>
<feature type="strand" evidence="22">
    <location>
        <begin position="432"/>
        <end position="434"/>
    </location>
</feature>
<feature type="strand" evidence="22">
    <location>
        <begin position="436"/>
        <end position="442"/>
    </location>
</feature>
<feature type="turn" evidence="22">
    <location>
        <begin position="443"/>
        <end position="445"/>
    </location>
</feature>
<feature type="strand" evidence="22">
    <location>
        <begin position="451"/>
        <end position="454"/>
    </location>
</feature>
<feature type="strand" evidence="22">
    <location>
        <begin position="460"/>
        <end position="465"/>
    </location>
</feature>
<feature type="strand" evidence="22">
    <location>
        <begin position="470"/>
        <end position="478"/>
    </location>
</feature>
<feature type="helix" evidence="22">
    <location>
        <begin position="480"/>
        <end position="482"/>
    </location>
</feature>
<gene>
    <name type="primary">VNN1</name>
</gene>
<comment type="function">
    <text evidence="3 4 11">Amidohydrolase that hydrolyzes specifically one of the carboamide linkages in D-pantetheine thus recycling pantothenic acid (vitamin B5) and releasing cysteamine.</text>
</comment>
<comment type="catalytic activity">
    <reaction evidence="4 11">
        <text>(R)-pantetheine + H2O = cysteamine + (R)-pantothenate</text>
        <dbReference type="Rhea" id="RHEA:13445"/>
        <dbReference type="ChEBI" id="CHEBI:15377"/>
        <dbReference type="ChEBI" id="CHEBI:16753"/>
        <dbReference type="ChEBI" id="CHEBI:29032"/>
        <dbReference type="ChEBI" id="CHEBI:58029"/>
        <dbReference type="EC" id="3.5.1.92"/>
    </reaction>
</comment>
<comment type="subunit">
    <text evidence="11">Monomer.</text>
</comment>
<comment type="subcellular location">
    <subcellularLocation>
        <location evidence="16">Cell membrane</location>
        <topology evidence="15">Lipid-anchor</topology>
        <topology evidence="15">GPI-anchor</topology>
    </subcellularLocation>
</comment>
<comment type="tissue specificity">
    <text evidence="10">Widely expressed with higher expression in spleen, kidney and blood. Overexpressed in lesional psoriatic skin.</text>
</comment>
<comment type="induction">
    <text evidence="10">By Th17/Th1 type cytokines, but not by Th2-type.</text>
</comment>
<comment type="similarity">
    <text evidence="15">Belongs to the carbon-nitrogen hydrolase superfamily. BTD/VNN family.</text>
</comment>
<keyword id="KW-0002">3D-structure</keyword>
<keyword id="KW-1003">Cell membrane</keyword>
<keyword id="KW-0325">Glycoprotein</keyword>
<keyword id="KW-0336">GPI-anchor</keyword>
<keyword id="KW-0378">Hydrolase</keyword>
<keyword id="KW-0449">Lipoprotein</keyword>
<keyword id="KW-0472">Membrane</keyword>
<keyword id="KW-1267">Proteomics identification</keyword>
<keyword id="KW-1185">Reference proteome</keyword>
<keyword id="KW-0732">Signal</keyword>
<organism>
    <name type="scientific">Homo sapiens</name>
    <name type="common">Human</name>
    <dbReference type="NCBI Taxonomy" id="9606"/>
    <lineage>
        <taxon>Eukaryota</taxon>
        <taxon>Metazoa</taxon>
        <taxon>Chordata</taxon>
        <taxon>Craniata</taxon>
        <taxon>Vertebrata</taxon>
        <taxon>Euteleostomi</taxon>
        <taxon>Mammalia</taxon>
        <taxon>Eutheria</taxon>
        <taxon>Euarchontoglires</taxon>
        <taxon>Primates</taxon>
        <taxon>Haplorrhini</taxon>
        <taxon>Catarrhini</taxon>
        <taxon>Hominidae</taxon>
        <taxon>Homo</taxon>
    </lineage>
</organism>
<sequence length="513" mass="57012">MTTQLPAYVAILLFYVSRASCQDTFTAAVYEHAAILPNATLTPVSREEALALMNRNLDILEGAITSAADQGAHIIVTPEDAIYGWNFNRDSLYPYLEDIPDPEVNWIPCNNRNRFGQTPVQERLSCLAKNNSIYVVANIGDKKPCDTSDPQCPPDGRYQYNTDVVFDSQGKLVARYHKQNLFMGENQFNVPKEPEIVTFNTTFGSFGIFTCFDILFHDPAVTLVKDFHVDTIVFPTAWMNVLPHLSAVEFHSAWAMGMRVNFLASNIHYPSKKMTGSGIYAPNSSRAFHYDMKTEEGKLLLSQLDSHPSHSAVVNWTSYASSIEALSSGNKEFKGTVFFDEFTFVKLTGVAGNYTVCQKDLCCHLSYKMSENIPNEVYALGAFDGLHTVEGRYYLQICTLLKCKTTNLNTCGDSAETASTRFEMFSLSGTFGTQYVFPEVLLSENQLAPGEFQVSTDGRLFSLKPTSGPVLTVTLFGRLYEKDWASNASSGLTAQARIIMLIVIAPIVCSLSW</sequence>
<name>VNN1_HUMAN</name>
<accession>O95497</accession>
<accession>A8K310</accession>
<accession>Q4JFW6</accession>
<accession>Q4VAS7</accession>
<accession>Q4VAS8</accession>
<accession>Q4VAS9</accession>
<accession>Q9UF16</accession>
<accession>Q9UJF4</accession>
<evidence type="ECO:0000255" key="1"/>
<evidence type="ECO:0000255" key="2">
    <source>
        <dbReference type="PROSITE-ProRule" id="PRU00054"/>
    </source>
</evidence>
<evidence type="ECO:0000269" key="3">
    <source>
    </source>
</evidence>
<evidence type="ECO:0000269" key="4">
    <source>
    </source>
</evidence>
<evidence type="ECO:0000269" key="5">
    <source>
    </source>
</evidence>
<evidence type="ECO:0000269" key="6">
    <source>
    </source>
</evidence>
<evidence type="ECO:0000269" key="7">
    <source>
    </source>
</evidence>
<evidence type="ECO:0000269" key="8">
    <source>
    </source>
</evidence>
<evidence type="ECO:0000269" key="9">
    <source>
    </source>
</evidence>
<evidence type="ECO:0000269" key="10">
    <source>
    </source>
</evidence>
<evidence type="ECO:0000269" key="11">
    <source>
    </source>
</evidence>
<evidence type="ECO:0000269" key="12">
    <source>
    </source>
</evidence>
<evidence type="ECO:0000269" key="13">
    <source ref="2"/>
</evidence>
<evidence type="ECO:0000269" key="14">
    <source ref="4"/>
</evidence>
<evidence type="ECO:0000305" key="15"/>
<evidence type="ECO:0000305" key="16">
    <source>
    </source>
</evidence>
<evidence type="ECO:0000305" key="17">
    <source>
    </source>
</evidence>
<evidence type="ECO:0007744" key="18">
    <source>
        <dbReference type="PDB" id="4CYF"/>
    </source>
</evidence>
<evidence type="ECO:0007744" key="19">
    <source>
        <dbReference type="PDB" id="4CYG"/>
    </source>
</evidence>
<evidence type="ECO:0007744" key="20">
    <source>
        <dbReference type="PDB" id="4CYY"/>
    </source>
</evidence>
<evidence type="ECO:0007829" key="21">
    <source>
        <dbReference type="PDB" id="4CYY"/>
    </source>
</evidence>
<evidence type="ECO:0007829" key="22">
    <source>
        <dbReference type="PDB" id="7SLV"/>
    </source>
</evidence>
<reference key="1">
    <citation type="journal article" date="1998" name="Genomics">
        <title>Two human genes related to murine vanin-1 are located on the long arm of human chromosome 6.</title>
        <authorList>
            <person name="Galland F."/>
            <person name="Malergue F."/>
            <person name="Bazin H."/>
            <person name="Mattei M.-G."/>
            <person name="Aurrand-Lions M."/>
            <person name="Theillet C."/>
            <person name="Naquet P."/>
        </authorList>
    </citation>
    <scope>NUCLEOTIDE SEQUENCE [MRNA]</scope>
    <scope>VARIANT ILE-26</scope>
    <source>
        <tissue>Liver</tissue>
    </source>
</reference>
<reference key="2">
    <citation type="submission" date="1995-10" db="EMBL/GenBank/DDBJ databases">
        <title>Human Tiff66.</title>
        <authorList>
            <person name="Prehn S."/>
            <person name="Friedrichson T."/>
            <person name="Henske A."/>
            <person name="Boehm S."/>
            <person name="Hartmann E."/>
            <person name="Kurzchalia T.V."/>
        </authorList>
    </citation>
    <scope>NUCLEOTIDE SEQUENCE [MRNA]</scope>
    <scope>VARIANT ILE-26</scope>
</reference>
<reference key="3">
    <citation type="journal article" date="2004" name="Nat. Genet.">
        <title>Complete sequencing and characterization of 21,243 full-length human cDNAs.</title>
        <authorList>
            <person name="Ota T."/>
            <person name="Suzuki Y."/>
            <person name="Nishikawa T."/>
            <person name="Otsuki T."/>
            <person name="Sugiyama T."/>
            <person name="Irie R."/>
            <person name="Wakamatsu A."/>
            <person name="Hayashi K."/>
            <person name="Sato H."/>
            <person name="Nagai K."/>
            <person name="Kimura K."/>
            <person name="Makita H."/>
            <person name="Sekine M."/>
            <person name="Obayashi M."/>
            <person name="Nishi T."/>
            <person name="Shibahara T."/>
            <person name="Tanaka T."/>
            <person name="Ishii S."/>
            <person name="Yamamoto J."/>
            <person name="Saito K."/>
            <person name="Kawai Y."/>
            <person name="Isono Y."/>
            <person name="Nakamura Y."/>
            <person name="Nagahari K."/>
            <person name="Murakami K."/>
            <person name="Yasuda T."/>
            <person name="Iwayanagi T."/>
            <person name="Wagatsuma M."/>
            <person name="Shiratori A."/>
            <person name="Sudo H."/>
            <person name="Hosoiri T."/>
            <person name="Kaku Y."/>
            <person name="Kodaira H."/>
            <person name="Kondo H."/>
            <person name="Sugawara M."/>
            <person name="Takahashi M."/>
            <person name="Kanda K."/>
            <person name="Yokoi T."/>
            <person name="Furuya T."/>
            <person name="Kikkawa E."/>
            <person name="Omura Y."/>
            <person name="Abe K."/>
            <person name="Kamihara K."/>
            <person name="Katsuta N."/>
            <person name="Sato K."/>
            <person name="Tanikawa M."/>
            <person name="Yamazaki M."/>
            <person name="Ninomiya K."/>
            <person name="Ishibashi T."/>
            <person name="Yamashita H."/>
            <person name="Murakawa K."/>
            <person name="Fujimori K."/>
            <person name="Tanai H."/>
            <person name="Kimata M."/>
            <person name="Watanabe M."/>
            <person name="Hiraoka S."/>
            <person name="Chiba Y."/>
            <person name="Ishida S."/>
            <person name="Ono Y."/>
            <person name="Takiguchi S."/>
            <person name="Watanabe S."/>
            <person name="Yosida M."/>
            <person name="Hotuta T."/>
            <person name="Kusano J."/>
            <person name="Kanehori K."/>
            <person name="Takahashi-Fujii A."/>
            <person name="Hara H."/>
            <person name="Tanase T.-O."/>
            <person name="Nomura Y."/>
            <person name="Togiya S."/>
            <person name="Komai F."/>
            <person name="Hara R."/>
            <person name="Takeuchi K."/>
            <person name="Arita M."/>
            <person name="Imose N."/>
            <person name="Musashino K."/>
            <person name="Yuuki H."/>
            <person name="Oshima A."/>
            <person name="Sasaki N."/>
            <person name="Aotsuka S."/>
            <person name="Yoshikawa Y."/>
            <person name="Matsunawa H."/>
            <person name="Ichihara T."/>
            <person name="Shiohata N."/>
            <person name="Sano S."/>
            <person name="Moriya S."/>
            <person name="Momiyama H."/>
            <person name="Satoh N."/>
            <person name="Takami S."/>
            <person name="Terashima Y."/>
            <person name="Suzuki O."/>
            <person name="Nakagawa S."/>
            <person name="Senoh A."/>
            <person name="Mizoguchi H."/>
            <person name="Goto Y."/>
            <person name="Shimizu F."/>
            <person name="Wakebe H."/>
            <person name="Hishigaki H."/>
            <person name="Watanabe T."/>
            <person name="Sugiyama A."/>
            <person name="Takemoto M."/>
            <person name="Kawakami B."/>
            <person name="Yamazaki M."/>
            <person name="Watanabe K."/>
            <person name="Kumagai A."/>
            <person name="Itakura S."/>
            <person name="Fukuzumi Y."/>
            <person name="Fujimori Y."/>
            <person name="Komiyama M."/>
            <person name="Tashiro H."/>
            <person name="Tanigami A."/>
            <person name="Fujiwara T."/>
            <person name="Ono T."/>
            <person name="Yamada K."/>
            <person name="Fujii Y."/>
            <person name="Ozaki K."/>
            <person name="Hirao M."/>
            <person name="Ohmori Y."/>
            <person name="Kawabata A."/>
            <person name="Hikiji T."/>
            <person name="Kobatake N."/>
            <person name="Inagaki H."/>
            <person name="Ikema Y."/>
            <person name="Okamoto S."/>
            <person name="Okitani R."/>
            <person name="Kawakami T."/>
            <person name="Noguchi S."/>
            <person name="Itoh T."/>
            <person name="Shigeta K."/>
            <person name="Senba T."/>
            <person name="Matsumura K."/>
            <person name="Nakajima Y."/>
            <person name="Mizuno T."/>
            <person name="Morinaga M."/>
            <person name="Sasaki M."/>
            <person name="Togashi T."/>
            <person name="Oyama M."/>
            <person name="Hata H."/>
            <person name="Watanabe M."/>
            <person name="Komatsu T."/>
            <person name="Mizushima-Sugano J."/>
            <person name="Satoh T."/>
            <person name="Shirai Y."/>
            <person name="Takahashi Y."/>
            <person name="Nakagawa K."/>
            <person name="Okumura K."/>
            <person name="Nagase T."/>
            <person name="Nomura N."/>
            <person name="Kikuchi H."/>
            <person name="Masuho Y."/>
            <person name="Yamashita R."/>
            <person name="Nakai K."/>
            <person name="Yada T."/>
            <person name="Nakamura Y."/>
            <person name="Ohara O."/>
            <person name="Isogai T."/>
            <person name="Sugano S."/>
        </authorList>
    </citation>
    <scope>NUCLEOTIDE SEQUENCE [LARGE SCALE MRNA]</scope>
    <scope>VARIANT ILE-26</scope>
    <source>
        <tissue>Umbilical cord blood</tissue>
    </source>
</reference>
<reference key="4">
    <citation type="submission" date="2005-06" db="EMBL/GenBank/DDBJ databases">
        <authorList>
            <consortium name="NIEHS SNPs program"/>
        </authorList>
    </citation>
    <scope>NUCLEOTIDE SEQUENCE [GENOMIC DNA]</scope>
    <scope>VARIANTS ILE-26; THR-63; SER-131; LEU-136; ASN-146; ASP-296; GLU-325; ALA-336 AND THR-373</scope>
</reference>
<reference key="5">
    <citation type="journal article" date="2003" name="Nature">
        <title>The DNA sequence and analysis of human chromosome 6.</title>
        <authorList>
            <person name="Mungall A.J."/>
            <person name="Palmer S.A."/>
            <person name="Sims S.K."/>
            <person name="Edwards C.A."/>
            <person name="Ashurst J.L."/>
            <person name="Wilming L."/>
            <person name="Jones M.C."/>
            <person name="Horton R."/>
            <person name="Hunt S.E."/>
            <person name="Scott C.E."/>
            <person name="Gilbert J.G.R."/>
            <person name="Clamp M.E."/>
            <person name="Bethel G."/>
            <person name="Milne S."/>
            <person name="Ainscough R."/>
            <person name="Almeida J.P."/>
            <person name="Ambrose K.D."/>
            <person name="Andrews T.D."/>
            <person name="Ashwell R.I.S."/>
            <person name="Babbage A.K."/>
            <person name="Bagguley C.L."/>
            <person name="Bailey J."/>
            <person name="Banerjee R."/>
            <person name="Barker D.J."/>
            <person name="Barlow K.F."/>
            <person name="Bates K."/>
            <person name="Beare D.M."/>
            <person name="Beasley H."/>
            <person name="Beasley O."/>
            <person name="Bird C.P."/>
            <person name="Blakey S.E."/>
            <person name="Bray-Allen S."/>
            <person name="Brook J."/>
            <person name="Brown A.J."/>
            <person name="Brown J.Y."/>
            <person name="Burford D.C."/>
            <person name="Burrill W."/>
            <person name="Burton J."/>
            <person name="Carder C."/>
            <person name="Carter N.P."/>
            <person name="Chapman J.C."/>
            <person name="Clark S.Y."/>
            <person name="Clark G."/>
            <person name="Clee C.M."/>
            <person name="Clegg S."/>
            <person name="Cobley V."/>
            <person name="Collier R.E."/>
            <person name="Collins J.E."/>
            <person name="Colman L.K."/>
            <person name="Corby N.R."/>
            <person name="Coville G.J."/>
            <person name="Culley K.M."/>
            <person name="Dhami P."/>
            <person name="Davies J."/>
            <person name="Dunn M."/>
            <person name="Earthrowl M.E."/>
            <person name="Ellington A.E."/>
            <person name="Evans K.A."/>
            <person name="Faulkner L."/>
            <person name="Francis M.D."/>
            <person name="Frankish A."/>
            <person name="Frankland J."/>
            <person name="French L."/>
            <person name="Garner P."/>
            <person name="Garnett J."/>
            <person name="Ghori M.J."/>
            <person name="Gilby L.M."/>
            <person name="Gillson C.J."/>
            <person name="Glithero R.J."/>
            <person name="Grafham D.V."/>
            <person name="Grant M."/>
            <person name="Gribble S."/>
            <person name="Griffiths C."/>
            <person name="Griffiths M.N.D."/>
            <person name="Hall R."/>
            <person name="Halls K.S."/>
            <person name="Hammond S."/>
            <person name="Harley J.L."/>
            <person name="Hart E.A."/>
            <person name="Heath P.D."/>
            <person name="Heathcott R."/>
            <person name="Holmes S.J."/>
            <person name="Howden P.J."/>
            <person name="Howe K.L."/>
            <person name="Howell G.R."/>
            <person name="Huckle E."/>
            <person name="Humphray S.J."/>
            <person name="Humphries M.D."/>
            <person name="Hunt A.R."/>
            <person name="Johnson C.M."/>
            <person name="Joy A.A."/>
            <person name="Kay M."/>
            <person name="Keenan S.J."/>
            <person name="Kimberley A.M."/>
            <person name="King A."/>
            <person name="Laird G.K."/>
            <person name="Langford C."/>
            <person name="Lawlor S."/>
            <person name="Leongamornlert D.A."/>
            <person name="Leversha M."/>
            <person name="Lloyd C.R."/>
            <person name="Lloyd D.M."/>
            <person name="Loveland J.E."/>
            <person name="Lovell J."/>
            <person name="Martin S."/>
            <person name="Mashreghi-Mohammadi M."/>
            <person name="Maslen G.L."/>
            <person name="Matthews L."/>
            <person name="McCann O.T."/>
            <person name="McLaren S.J."/>
            <person name="McLay K."/>
            <person name="McMurray A."/>
            <person name="Moore M.J.F."/>
            <person name="Mullikin J.C."/>
            <person name="Niblett D."/>
            <person name="Nickerson T."/>
            <person name="Novik K.L."/>
            <person name="Oliver K."/>
            <person name="Overton-Larty E.K."/>
            <person name="Parker A."/>
            <person name="Patel R."/>
            <person name="Pearce A.V."/>
            <person name="Peck A.I."/>
            <person name="Phillimore B.J.C.T."/>
            <person name="Phillips S."/>
            <person name="Plumb R.W."/>
            <person name="Porter K.M."/>
            <person name="Ramsey Y."/>
            <person name="Ranby S.A."/>
            <person name="Rice C.M."/>
            <person name="Ross M.T."/>
            <person name="Searle S.M."/>
            <person name="Sehra H.K."/>
            <person name="Sheridan E."/>
            <person name="Skuce C.D."/>
            <person name="Smith S."/>
            <person name="Smith M."/>
            <person name="Spraggon L."/>
            <person name="Squares S.L."/>
            <person name="Steward C.A."/>
            <person name="Sycamore N."/>
            <person name="Tamlyn-Hall G."/>
            <person name="Tester J."/>
            <person name="Theaker A.J."/>
            <person name="Thomas D.W."/>
            <person name="Thorpe A."/>
            <person name="Tracey A."/>
            <person name="Tromans A."/>
            <person name="Tubby B."/>
            <person name="Wall M."/>
            <person name="Wallis J.M."/>
            <person name="West A.P."/>
            <person name="White S.S."/>
            <person name="Whitehead S.L."/>
            <person name="Whittaker H."/>
            <person name="Wild A."/>
            <person name="Willey D.J."/>
            <person name="Wilmer T.E."/>
            <person name="Wood J.M."/>
            <person name="Wray P.W."/>
            <person name="Wyatt J.C."/>
            <person name="Young L."/>
            <person name="Younger R.M."/>
            <person name="Bentley D.R."/>
            <person name="Coulson A."/>
            <person name="Durbin R.M."/>
            <person name="Hubbard T."/>
            <person name="Sulston J.E."/>
            <person name="Dunham I."/>
            <person name="Rogers J."/>
            <person name="Beck S."/>
        </authorList>
    </citation>
    <scope>NUCLEOTIDE SEQUENCE [LARGE SCALE GENOMIC DNA]</scope>
</reference>
<reference key="6">
    <citation type="journal article" date="2004" name="Genome Res.">
        <title>The status, quality, and expansion of the NIH full-length cDNA project: the Mammalian Gene Collection (MGC).</title>
        <authorList>
            <consortium name="The MGC Project Team"/>
        </authorList>
    </citation>
    <scope>NUCLEOTIDE SEQUENCE [LARGE SCALE MRNA]</scope>
    <scope>VARIANT SER-131</scope>
</reference>
<reference key="7">
    <citation type="journal article" date="1999" name="FEBS Lett.">
        <title>Is pantetheinase the actual identity of mouse and human vanin-1 proteins?</title>
        <authorList>
            <person name="Maras B."/>
            <person name="Barra D."/>
            <person name="Dupre S."/>
            <person name="Pitari G."/>
        </authorList>
    </citation>
    <scope>IDENTIFICATION</scope>
</reference>
<reference key="8">
    <citation type="journal article" date="2001" name="Immunogenetics">
        <title>Vanin genes are clustered (human 6q22-24 and mouse 10A2B1) and encode isoforms of pantetheinase ectoenzymes.</title>
        <authorList>
            <person name="Martin F."/>
            <person name="Malergue F."/>
            <person name="Pitari G."/>
            <person name="Philippe J.M."/>
            <person name="Philips S."/>
            <person name="Chabret C."/>
            <person name="Granjeaud S."/>
            <person name="Mattei M.G."/>
            <person name="Mungall A.J."/>
            <person name="Naquet P."/>
            <person name="Galland F."/>
        </authorList>
    </citation>
    <scope>FUNCTION</scope>
    <scope>CATALYTIC ACTIVITY</scope>
    <scope>SUBCELLULAR LOCATION</scope>
</reference>
<reference key="9">
    <citation type="journal article" date="2004" name="Mol. Cell. Proteomics">
        <title>A proteomic analysis of human bile.</title>
        <authorList>
            <person name="Kristiansen T.Z."/>
            <person name="Bunkenborg J."/>
            <person name="Gronborg M."/>
            <person name="Molina H."/>
            <person name="Thuluvath P.J."/>
            <person name="Argani P."/>
            <person name="Goggins M.G."/>
            <person name="Maitra A."/>
            <person name="Pandey A."/>
        </authorList>
    </citation>
    <scope>GLYCOSYLATION [LARGE SCALE ANALYSIS] AT ASN-38 AND ASN-353</scope>
    <source>
        <tissue>Bile</tissue>
    </source>
</reference>
<reference key="10">
    <citation type="journal article" date="2005" name="J. Proteome Res.">
        <title>Human plasma N-glycoproteome analysis by immunoaffinity subtraction, hydrazide chemistry, and mass spectrometry.</title>
        <authorList>
            <person name="Liu T."/>
            <person name="Qian W.-J."/>
            <person name="Gritsenko M.A."/>
            <person name="Camp D.G. II"/>
            <person name="Monroe M.E."/>
            <person name="Moore R.J."/>
            <person name="Smith R.D."/>
        </authorList>
    </citation>
    <scope>GLYCOSYLATION [LARGE SCALE ANALYSIS] AT ASN-130; ASN-283; ASN-315 AND ASN-353</scope>
    <source>
        <tissue>Plasma</tissue>
    </source>
</reference>
<reference key="11">
    <citation type="journal article" date="2009" name="J. Invest. Dermatol.">
        <title>Expression of the vanin gene family in normal and inflamed human skin: induction by proinflammatory cytokines.</title>
        <authorList>
            <person name="Jansen P.A.M."/>
            <person name="Kamsteeg M."/>
            <person name="Rodijk-Olthuis D."/>
            <person name="van Vlijmen-Willems I.M.J.J."/>
            <person name="de Jongh G.J."/>
            <person name="Bergers M."/>
            <person name="Tjabringa G.S."/>
            <person name="Zeeuwen P.L.J.M."/>
            <person name="Schalkwijk J."/>
        </authorList>
    </citation>
    <scope>TISSUE SPECIFICITY</scope>
    <scope>INDUCTION BY CYTOKINES</scope>
</reference>
<reference key="12">
    <citation type="journal article" date="2009" name="J. Proteome Res.">
        <title>Glycoproteomics analysis of human liver tissue by combination of multiple enzyme digestion and hydrazide chemistry.</title>
        <authorList>
            <person name="Chen R."/>
            <person name="Jiang X."/>
            <person name="Sun D."/>
            <person name="Han G."/>
            <person name="Wang F."/>
            <person name="Ye M."/>
            <person name="Wang L."/>
            <person name="Zou H."/>
        </authorList>
    </citation>
    <scope>GLYCOSYLATION [LARGE SCALE ANALYSIS] AT ASN-353</scope>
    <source>
        <tissue>Liver</tissue>
    </source>
</reference>
<reference key="13">
    <citation type="journal article" date="2014" name="Acta Crystallogr. D">
        <title>The structure of vanin 1: a key enzyme linking metabolic disease and inflammation.</title>
        <authorList>
            <person name="Boersma Y.L."/>
            <person name="Newman J."/>
            <person name="Adams T.E."/>
            <person name="Cowieson N."/>
            <person name="Krippner G."/>
            <person name="Bozaoglu K."/>
            <person name="Peat T.S."/>
        </authorList>
    </citation>
    <scope>X-RAY CRYSTALLOGRAPHY (2.25 ANGSTROMS) OF 22-513 IN COMPLEX WITH SYNTHETIC INHIBITOR</scope>
    <scope>FUNCTION</scope>
    <scope>CATALYTIC ACTIVITY</scope>
    <scope>GLYCOSYLATION AT ASN-38; ASN-130; ASN-200; ASN-315 AND ASN-353</scope>
    <scope>ACTIVE SITE</scope>
    <scope>SUBUNIT</scope>
    <scope>MUTAGENESIS OF GLU-79 AND LYS-178</scope>
</reference>